<organism>
    <name type="scientific">Rickettsia typhi (strain ATCC VR-144 / Wilmington)</name>
    <dbReference type="NCBI Taxonomy" id="257363"/>
    <lineage>
        <taxon>Bacteria</taxon>
        <taxon>Pseudomonadati</taxon>
        <taxon>Pseudomonadota</taxon>
        <taxon>Alphaproteobacteria</taxon>
        <taxon>Rickettsiales</taxon>
        <taxon>Rickettsiaceae</taxon>
        <taxon>Rickettsieae</taxon>
        <taxon>Rickettsia</taxon>
        <taxon>typhus group</taxon>
    </lineage>
</organism>
<comment type="function">
    <text evidence="1">NDH-1 shuttles electrons from NADH, via FMN and iron-sulfur (Fe-S) centers, to quinones in the respiratory chain. The immediate electron acceptor for the enzyme in this species is believed to be ubiquinone. Couples the redox reaction to proton translocation (for every two electrons transferred, four hydrogen ions are translocated across the cytoplasmic membrane), and thus conserves the redox energy in a proton gradient.</text>
</comment>
<comment type="catalytic activity">
    <reaction evidence="1">
        <text>a quinone + NADH + 5 H(+)(in) = a quinol + NAD(+) + 4 H(+)(out)</text>
        <dbReference type="Rhea" id="RHEA:57888"/>
        <dbReference type="ChEBI" id="CHEBI:15378"/>
        <dbReference type="ChEBI" id="CHEBI:24646"/>
        <dbReference type="ChEBI" id="CHEBI:57540"/>
        <dbReference type="ChEBI" id="CHEBI:57945"/>
        <dbReference type="ChEBI" id="CHEBI:132124"/>
    </reaction>
</comment>
<comment type="subunit">
    <text evidence="1">NDH-1 is composed of 14 different subunits. Subunits NuoB, C, D, E, F, and G constitute the peripheral sector of the complex.</text>
</comment>
<comment type="subcellular location">
    <subcellularLocation>
        <location evidence="1">Cell inner membrane</location>
        <topology evidence="1">Peripheral membrane protein</topology>
        <orientation evidence="1">Cytoplasmic side</orientation>
    </subcellularLocation>
</comment>
<comment type="similarity">
    <text evidence="1">Belongs to the complex I 30 kDa subunit family.</text>
</comment>
<evidence type="ECO:0000255" key="1">
    <source>
        <dbReference type="HAMAP-Rule" id="MF_01357"/>
    </source>
</evidence>
<reference key="1">
    <citation type="journal article" date="2004" name="J. Bacteriol.">
        <title>Complete genome sequence of Rickettsia typhi and comparison with sequences of other Rickettsiae.</title>
        <authorList>
            <person name="McLeod M.P."/>
            <person name="Qin X."/>
            <person name="Karpathy S.E."/>
            <person name="Gioia J."/>
            <person name="Highlander S.K."/>
            <person name="Fox G.E."/>
            <person name="McNeill T.Z."/>
            <person name="Jiang H."/>
            <person name="Muzny D."/>
            <person name="Jacob L.S."/>
            <person name="Hawes A.C."/>
            <person name="Sodergren E."/>
            <person name="Gill R."/>
            <person name="Hume J."/>
            <person name="Morgan M."/>
            <person name="Fan G."/>
            <person name="Amin A.G."/>
            <person name="Gibbs R.A."/>
            <person name="Hong C."/>
            <person name="Yu X.-J."/>
            <person name="Walker D.H."/>
            <person name="Weinstock G.M."/>
        </authorList>
    </citation>
    <scope>NUCLEOTIDE SEQUENCE [LARGE SCALE GENOMIC DNA]</scope>
    <source>
        <strain>ATCC VR-144 / Wilmington</strain>
    </source>
</reference>
<proteinExistence type="inferred from homology"/>
<keyword id="KW-0997">Cell inner membrane</keyword>
<keyword id="KW-1003">Cell membrane</keyword>
<keyword id="KW-0472">Membrane</keyword>
<keyword id="KW-0520">NAD</keyword>
<keyword id="KW-0874">Quinone</keyword>
<keyword id="KW-1278">Translocase</keyword>
<keyword id="KW-0813">Transport</keyword>
<keyword id="KW-0830">Ubiquinone</keyword>
<accession>Q68X18</accession>
<sequence>MTLDELIDKLAAKSRILITKVTVKDHLAYKIEPHFLLPFLKALKESEELRFTVLTDLFGVDFPKREKRFEIVYNLLSLKLNKNLIIKTNISEKESIPSAMKILSAACWYELEVYDMYGVNFNGNNDKRRILTDYDFEGHPLRKDFPLTGYTQVKYDKKLKKIAYEPVNLDIEYREFDFSSHWHSPSYILPGDEKAEK</sequence>
<name>NUOC_RICTY</name>
<feature type="chain" id="PRO_0000287860" description="NADH-quinone oxidoreductase subunit C">
    <location>
        <begin position="1"/>
        <end position="197"/>
    </location>
</feature>
<dbReference type="EC" id="7.1.1.-" evidence="1"/>
<dbReference type="EMBL" id="AE017197">
    <property type="protein sequence ID" value="AAU03824.1"/>
    <property type="molecule type" value="Genomic_DNA"/>
</dbReference>
<dbReference type="RefSeq" id="WP_011190808.1">
    <property type="nucleotide sequence ID" value="NC_006142.1"/>
</dbReference>
<dbReference type="SMR" id="Q68X18"/>
<dbReference type="KEGG" id="rty:RT0344"/>
<dbReference type="eggNOG" id="COG0852">
    <property type="taxonomic scope" value="Bacteria"/>
</dbReference>
<dbReference type="HOGENOM" id="CLU_042628_2_1_5"/>
<dbReference type="OrthoDB" id="9803286at2"/>
<dbReference type="Proteomes" id="UP000000604">
    <property type="component" value="Chromosome"/>
</dbReference>
<dbReference type="GO" id="GO:0005886">
    <property type="term" value="C:plasma membrane"/>
    <property type="evidence" value="ECO:0007669"/>
    <property type="project" value="UniProtKB-SubCell"/>
</dbReference>
<dbReference type="GO" id="GO:0008137">
    <property type="term" value="F:NADH dehydrogenase (ubiquinone) activity"/>
    <property type="evidence" value="ECO:0007669"/>
    <property type="project" value="InterPro"/>
</dbReference>
<dbReference type="GO" id="GO:0050136">
    <property type="term" value="F:NADH:ubiquinone reductase (non-electrogenic) activity"/>
    <property type="evidence" value="ECO:0007669"/>
    <property type="project" value="UniProtKB-UniRule"/>
</dbReference>
<dbReference type="GO" id="GO:0048038">
    <property type="term" value="F:quinone binding"/>
    <property type="evidence" value="ECO:0007669"/>
    <property type="project" value="UniProtKB-KW"/>
</dbReference>
<dbReference type="Gene3D" id="3.30.460.80">
    <property type="entry name" value="NADH:ubiquinone oxidoreductase, 30kDa subunit"/>
    <property type="match status" value="1"/>
</dbReference>
<dbReference type="HAMAP" id="MF_01357">
    <property type="entry name" value="NDH1_NuoC"/>
    <property type="match status" value="1"/>
</dbReference>
<dbReference type="InterPro" id="IPR010218">
    <property type="entry name" value="NADH_DH_suC"/>
</dbReference>
<dbReference type="InterPro" id="IPR037232">
    <property type="entry name" value="NADH_quin_OxRdtase_su_C/D-like"/>
</dbReference>
<dbReference type="InterPro" id="IPR001268">
    <property type="entry name" value="NADH_UbQ_OxRdtase_30kDa_su"/>
</dbReference>
<dbReference type="NCBIfam" id="TIGR01961">
    <property type="entry name" value="NuoC_fam"/>
    <property type="match status" value="1"/>
</dbReference>
<dbReference type="NCBIfam" id="NF004731">
    <property type="entry name" value="PRK06074.1-3"/>
    <property type="match status" value="1"/>
</dbReference>
<dbReference type="NCBIfam" id="NF004733">
    <property type="entry name" value="PRK06074.1-5"/>
    <property type="match status" value="1"/>
</dbReference>
<dbReference type="PANTHER" id="PTHR10884:SF14">
    <property type="entry name" value="NADH DEHYDROGENASE [UBIQUINONE] IRON-SULFUR PROTEIN 3, MITOCHONDRIAL"/>
    <property type="match status" value="1"/>
</dbReference>
<dbReference type="PANTHER" id="PTHR10884">
    <property type="entry name" value="NADH DEHYDROGENASE UBIQUINONE IRON-SULFUR PROTEIN 3"/>
    <property type="match status" value="1"/>
</dbReference>
<dbReference type="Pfam" id="PF00329">
    <property type="entry name" value="Complex1_30kDa"/>
    <property type="match status" value="1"/>
</dbReference>
<dbReference type="SUPFAM" id="SSF143243">
    <property type="entry name" value="Nqo5-like"/>
    <property type="match status" value="1"/>
</dbReference>
<gene>
    <name evidence="1" type="primary">nuoC</name>
    <name type="ordered locus">RT0344</name>
</gene>
<protein>
    <recommendedName>
        <fullName evidence="1">NADH-quinone oxidoreductase subunit C</fullName>
        <ecNumber evidence="1">7.1.1.-</ecNumber>
    </recommendedName>
    <alternativeName>
        <fullName evidence="1">NADH dehydrogenase I subunit C</fullName>
    </alternativeName>
    <alternativeName>
        <fullName evidence="1">NDH-1 subunit C</fullName>
    </alternativeName>
</protein>